<sequence length="415" mass="46584">MFADLDYDIEEDKLGIPTVPGKVTLQKDAQNLIGISIGGGAQYCPCLYIVQVFDNTPAALDGTVAAGDEITGVNGRSIKGKTKVEVAKMIQEVKGEVTIHYNKLQADPKQGMSLDIVLKKVKHRLVENMSSGTADALGLSRAILCNDGLVKRLEELERTAELYKGMTEHTKNLLRAFYELSQTHRAFGDVFSVIGVREPQPAASEAFVKFADAHRSIEKFGIRLLKTIKPMLTDLNTYLNKAIPDTRLTIKKYLDVKFEYLSYCLKVKEMDDEEYSCIALGEPLYRVSTGNYEYRLILRCRQEARARFSQMRKDVLEKMELLDQKHVQDIVFQLQRLVSTMSKYYNDCYAVLRDADVFPIEVDLAHTTLAYGLNQEEFTDGEEEEEEEDTAAGEPARDTRGAAGPLDKGGSWCDS</sequence>
<dbReference type="EMBL" id="CR857558">
    <property type="protein sequence ID" value="CAH89836.1"/>
    <property type="molecule type" value="mRNA"/>
</dbReference>
<dbReference type="RefSeq" id="NP_001124851.1">
    <property type="nucleotide sequence ID" value="NM_001131379.1"/>
</dbReference>
<dbReference type="RefSeq" id="XP_024095339.1">
    <property type="nucleotide sequence ID" value="XM_024239571.3"/>
</dbReference>
<dbReference type="RefSeq" id="XP_024095340.1">
    <property type="nucleotide sequence ID" value="XM_024239572.3"/>
</dbReference>
<dbReference type="SMR" id="Q5REH1"/>
<dbReference type="FunCoup" id="Q5REH1">
    <property type="interactions" value="552"/>
</dbReference>
<dbReference type="STRING" id="9601.ENSPPYP00000013176"/>
<dbReference type="Ensembl" id="ENSPPYT00000035081.1">
    <property type="protein sequence ID" value="ENSPPYP00000037143.1"/>
    <property type="gene ID" value="ENSPPYG00000011812.3"/>
</dbReference>
<dbReference type="GeneID" id="100171712"/>
<dbReference type="KEGG" id="pon:100171712"/>
<dbReference type="CTD" id="9463"/>
<dbReference type="eggNOG" id="KOG3651">
    <property type="taxonomic scope" value="Eukaryota"/>
</dbReference>
<dbReference type="GeneTree" id="ENSGT00950000183040"/>
<dbReference type="InParanoid" id="Q5REH1"/>
<dbReference type="OrthoDB" id="5917245at2759"/>
<dbReference type="Proteomes" id="UP000001595">
    <property type="component" value="Chromosome 22"/>
</dbReference>
<dbReference type="GO" id="GO:0005856">
    <property type="term" value="C:cytoskeleton"/>
    <property type="evidence" value="ECO:0007669"/>
    <property type="project" value="UniProtKB-SubCell"/>
</dbReference>
<dbReference type="GO" id="GO:0043005">
    <property type="term" value="C:neuron projection"/>
    <property type="evidence" value="ECO:0000250"/>
    <property type="project" value="UniProtKB"/>
</dbReference>
<dbReference type="GO" id="GO:0048471">
    <property type="term" value="C:perinuclear region of cytoplasm"/>
    <property type="evidence" value="ECO:0007669"/>
    <property type="project" value="UniProtKB-SubCell"/>
</dbReference>
<dbReference type="GO" id="GO:0005886">
    <property type="term" value="C:plasma membrane"/>
    <property type="evidence" value="ECO:0007669"/>
    <property type="project" value="GOC"/>
</dbReference>
<dbReference type="GO" id="GO:0014069">
    <property type="term" value="C:postsynaptic density"/>
    <property type="evidence" value="ECO:0007669"/>
    <property type="project" value="UniProtKB-SubCell"/>
</dbReference>
<dbReference type="GO" id="GO:0098842">
    <property type="term" value="C:postsynaptic early endosome"/>
    <property type="evidence" value="ECO:0007669"/>
    <property type="project" value="TreeGrafter"/>
</dbReference>
<dbReference type="GO" id="GO:0008021">
    <property type="term" value="C:synaptic vesicle"/>
    <property type="evidence" value="ECO:0007669"/>
    <property type="project" value="TreeGrafter"/>
</dbReference>
<dbReference type="GO" id="GO:0032588">
    <property type="term" value="C:trans-Golgi network membrane"/>
    <property type="evidence" value="ECO:0007669"/>
    <property type="project" value="TreeGrafter"/>
</dbReference>
<dbReference type="GO" id="GO:0051015">
    <property type="term" value="F:actin filament binding"/>
    <property type="evidence" value="ECO:0000250"/>
    <property type="project" value="UniProtKB"/>
</dbReference>
<dbReference type="GO" id="GO:0071933">
    <property type="term" value="F:Arp2/3 complex binding"/>
    <property type="evidence" value="ECO:0000250"/>
    <property type="project" value="UniProtKB"/>
</dbReference>
<dbReference type="GO" id="GO:0046872">
    <property type="term" value="F:metal ion binding"/>
    <property type="evidence" value="ECO:0007669"/>
    <property type="project" value="UniProtKB-KW"/>
</dbReference>
<dbReference type="GO" id="GO:0005543">
    <property type="term" value="F:phospholipid binding"/>
    <property type="evidence" value="ECO:0007669"/>
    <property type="project" value="TreeGrafter"/>
</dbReference>
<dbReference type="GO" id="GO:0019904">
    <property type="term" value="F:protein domain specific binding"/>
    <property type="evidence" value="ECO:0007669"/>
    <property type="project" value="InterPro"/>
</dbReference>
<dbReference type="GO" id="GO:0005080">
    <property type="term" value="F:protein kinase C binding"/>
    <property type="evidence" value="ECO:0007669"/>
    <property type="project" value="TreeGrafter"/>
</dbReference>
<dbReference type="GO" id="GO:0036294">
    <property type="term" value="P:cellular response to decreased oxygen levels"/>
    <property type="evidence" value="ECO:0000250"/>
    <property type="project" value="UniProtKB"/>
</dbReference>
<dbReference type="GO" id="GO:0042149">
    <property type="term" value="P:cellular response to glucose starvation"/>
    <property type="evidence" value="ECO:0000250"/>
    <property type="project" value="UniProtKB"/>
</dbReference>
<dbReference type="GO" id="GO:0097062">
    <property type="term" value="P:dendritic spine maintenance"/>
    <property type="evidence" value="ECO:0000250"/>
    <property type="project" value="UniProtKB"/>
</dbReference>
<dbReference type="GO" id="GO:0097061">
    <property type="term" value="P:dendritic spine organization"/>
    <property type="evidence" value="ECO:0000250"/>
    <property type="project" value="UniProtKB"/>
</dbReference>
<dbReference type="GO" id="GO:0021782">
    <property type="term" value="P:glial cell development"/>
    <property type="evidence" value="ECO:0000250"/>
    <property type="project" value="UniProtKB"/>
</dbReference>
<dbReference type="GO" id="GO:0006886">
    <property type="term" value="P:intracellular protein transport"/>
    <property type="evidence" value="ECO:0007669"/>
    <property type="project" value="TreeGrafter"/>
</dbReference>
<dbReference type="GO" id="GO:0060292">
    <property type="term" value="P:long-term synaptic depression"/>
    <property type="evidence" value="ECO:0000250"/>
    <property type="project" value="UniProtKB"/>
</dbReference>
<dbReference type="GO" id="GO:0034316">
    <property type="term" value="P:negative regulation of Arp2/3 complex-mediated actin nucleation"/>
    <property type="evidence" value="ECO:0000250"/>
    <property type="project" value="UniProtKB"/>
</dbReference>
<dbReference type="GO" id="GO:0002092">
    <property type="term" value="P:positive regulation of receptor internalization"/>
    <property type="evidence" value="ECO:0000250"/>
    <property type="project" value="UniProtKB"/>
</dbReference>
<dbReference type="GO" id="GO:0043113">
    <property type="term" value="P:receptor clustering"/>
    <property type="evidence" value="ECO:0007669"/>
    <property type="project" value="TreeGrafter"/>
</dbReference>
<dbReference type="CDD" id="cd07659">
    <property type="entry name" value="BAR_PICK1"/>
    <property type="match status" value="1"/>
</dbReference>
<dbReference type="CDD" id="cd06722">
    <property type="entry name" value="PDZ_PICK1-like"/>
    <property type="match status" value="1"/>
</dbReference>
<dbReference type="FunFam" id="1.20.1270.60:FF:000023">
    <property type="entry name" value="Interacting with PRKCA"/>
    <property type="match status" value="1"/>
</dbReference>
<dbReference type="FunFam" id="2.30.42.10:FF:000073">
    <property type="entry name" value="Interacting with PRKCA"/>
    <property type="match status" value="1"/>
</dbReference>
<dbReference type="Gene3D" id="2.30.42.10">
    <property type="match status" value="1"/>
</dbReference>
<dbReference type="Gene3D" id="1.20.1270.60">
    <property type="entry name" value="Arfaptin homology (AH) domain/BAR domain"/>
    <property type="match status" value="1"/>
</dbReference>
<dbReference type="InterPro" id="IPR027267">
    <property type="entry name" value="AH/BAR_dom_sf"/>
</dbReference>
<dbReference type="InterPro" id="IPR010504">
    <property type="entry name" value="AH_dom"/>
</dbReference>
<dbReference type="InterPro" id="IPR030798">
    <property type="entry name" value="Arfaptin_fam"/>
</dbReference>
<dbReference type="InterPro" id="IPR001478">
    <property type="entry name" value="PDZ"/>
</dbReference>
<dbReference type="InterPro" id="IPR036034">
    <property type="entry name" value="PDZ_sf"/>
</dbReference>
<dbReference type="InterPro" id="IPR037959">
    <property type="entry name" value="PICK1_BAR"/>
</dbReference>
<dbReference type="PANTHER" id="PTHR12141">
    <property type="entry name" value="ARFAPTIN-RELATED"/>
    <property type="match status" value="1"/>
</dbReference>
<dbReference type="PANTHER" id="PTHR12141:SF1">
    <property type="entry name" value="PRKCA-BINDING PROTEIN"/>
    <property type="match status" value="1"/>
</dbReference>
<dbReference type="Pfam" id="PF06456">
    <property type="entry name" value="Arfaptin"/>
    <property type="match status" value="1"/>
</dbReference>
<dbReference type="Pfam" id="PF00595">
    <property type="entry name" value="PDZ"/>
    <property type="match status" value="1"/>
</dbReference>
<dbReference type="SMART" id="SM01015">
    <property type="entry name" value="Arfaptin"/>
    <property type="match status" value="1"/>
</dbReference>
<dbReference type="SMART" id="SM00228">
    <property type="entry name" value="PDZ"/>
    <property type="match status" value="1"/>
</dbReference>
<dbReference type="SUPFAM" id="SSF103657">
    <property type="entry name" value="BAR/IMD domain-like"/>
    <property type="match status" value="1"/>
</dbReference>
<dbReference type="SUPFAM" id="SSF50156">
    <property type="entry name" value="PDZ domain-like"/>
    <property type="match status" value="1"/>
</dbReference>
<dbReference type="PROSITE" id="PS50870">
    <property type="entry name" value="AH"/>
    <property type="match status" value="1"/>
</dbReference>
<dbReference type="PROSITE" id="PS50106">
    <property type="entry name" value="PDZ"/>
    <property type="match status" value="1"/>
</dbReference>
<name>PICK1_PONAB</name>
<feature type="chain" id="PRO_0000318900" description="PRKCA-binding protein">
    <location>
        <begin position="1"/>
        <end position="415"/>
    </location>
</feature>
<feature type="domain" description="PDZ" evidence="5">
    <location>
        <begin position="22"/>
        <end position="105"/>
    </location>
</feature>
<feature type="domain" description="AH" evidence="6">
    <location>
        <begin position="144"/>
        <end position="357"/>
    </location>
</feature>
<feature type="region of interest" description="Disordered" evidence="7">
    <location>
        <begin position="376"/>
        <end position="415"/>
    </location>
</feature>
<feature type="compositionally biased region" description="Acidic residues" evidence="7">
    <location>
        <begin position="377"/>
        <end position="391"/>
    </location>
</feature>
<feature type="binding site" evidence="1">
    <location>
        <position position="44"/>
    </location>
    <ligand>
        <name>Zn(2+)</name>
        <dbReference type="ChEBI" id="CHEBI:29105"/>
    </ligand>
</feature>
<feature type="binding site" evidence="1">
    <location>
        <position position="46"/>
    </location>
    <ligand>
        <name>Zn(2+)</name>
        <dbReference type="ChEBI" id="CHEBI:29105"/>
    </ligand>
</feature>
<feature type="modified residue" description="Phosphothreonine" evidence="4">
    <location>
        <position position="82"/>
    </location>
</feature>
<feature type="lipid moiety-binding region" description="S-palmitoyl cysteine; by DHHC8" evidence="1">
    <location>
        <position position="413"/>
    </location>
</feature>
<reference key="1">
    <citation type="submission" date="2004-11" db="EMBL/GenBank/DDBJ databases">
        <authorList>
            <consortium name="The German cDNA consortium"/>
        </authorList>
    </citation>
    <scope>NUCLEOTIDE SEQUENCE [LARGE SCALE MRNA]</scope>
    <source>
        <tissue>Liver</tissue>
    </source>
</reference>
<proteinExistence type="evidence at transcript level"/>
<gene>
    <name type="primary">PICK1</name>
    <name type="synonym">PRKCABP</name>
</gene>
<evidence type="ECO:0000250" key="1"/>
<evidence type="ECO:0000250" key="2">
    <source>
        <dbReference type="UniProtKB" id="Q62083"/>
    </source>
</evidence>
<evidence type="ECO:0000250" key="3">
    <source>
        <dbReference type="UniProtKB" id="Q9EP80"/>
    </source>
</evidence>
<evidence type="ECO:0000250" key="4">
    <source>
        <dbReference type="UniProtKB" id="Q9NRD5"/>
    </source>
</evidence>
<evidence type="ECO:0000255" key="5">
    <source>
        <dbReference type="PROSITE-ProRule" id="PRU00143"/>
    </source>
</evidence>
<evidence type="ECO:0000255" key="6">
    <source>
        <dbReference type="PROSITE-ProRule" id="PRU00294"/>
    </source>
</evidence>
<evidence type="ECO:0000256" key="7">
    <source>
        <dbReference type="SAM" id="MobiDB-lite"/>
    </source>
</evidence>
<protein>
    <recommendedName>
        <fullName>PRKCA-binding protein</fullName>
    </recommendedName>
    <alternativeName>
        <fullName>Protein interacting with C kinase 1</fullName>
    </alternativeName>
    <alternativeName>
        <fullName>Protein kinase C-alpha-binding protein</fullName>
    </alternativeName>
</protein>
<accession>Q5REH1</accession>
<keyword id="KW-0009">Actin-binding</keyword>
<keyword id="KW-0106">Calcium</keyword>
<keyword id="KW-0963">Cytoplasm</keyword>
<keyword id="KW-0206">Cytoskeleton</keyword>
<keyword id="KW-0449">Lipoprotein</keyword>
<keyword id="KW-0472">Membrane</keyword>
<keyword id="KW-0479">Metal-binding</keyword>
<keyword id="KW-0564">Palmitate</keyword>
<keyword id="KW-0597">Phosphoprotein</keyword>
<keyword id="KW-1185">Reference proteome</keyword>
<keyword id="KW-0770">Synapse</keyword>
<keyword id="KW-0771">Synaptosome</keyword>
<keyword id="KW-0862">Zinc</keyword>
<organism>
    <name type="scientific">Pongo abelii</name>
    <name type="common">Sumatran orangutan</name>
    <name type="synonym">Pongo pygmaeus abelii</name>
    <dbReference type="NCBI Taxonomy" id="9601"/>
    <lineage>
        <taxon>Eukaryota</taxon>
        <taxon>Metazoa</taxon>
        <taxon>Chordata</taxon>
        <taxon>Craniata</taxon>
        <taxon>Vertebrata</taxon>
        <taxon>Euteleostomi</taxon>
        <taxon>Mammalia</taxon>
        <taxon>Eutheria</taxon>
        <taxon>Euarchontoglires</taxon>
        <taxon>Primates</taxon>
        <taxon>Haplorrhini</taxon>
        <taxon>Catarrhini</taxon>
        <taxon>Hominidae</taxon>
        <taxon>Pongo</taxon>
    </lineage>
</organism>
<comment type="function">
    <text evidence="1">Probable adapter protein that bind to and organize the subcellular localization of a variety of membrane proteins containing some PDZ recognition sequence. Involved in the clustering of various receptors, possibly by acting at the receptor internalization level. Plays a role in synaptic plasticity by regulating the trafficking and internalization of AMPA receptors. May be regulated upon PRKCA activation. May regulate ASIC1/ASIC3 channel. Regulates actin polymerization by inhibiting the actin-nucleating activity of the Arp2/3 complex; the function is competitive with nucleation promoting factors and is linked to neuronal morphology regulation and AMPA receptor (AMPAR) endocytosis. Via interaction with the Arp2/3 complex involved in regulation of synaptic plasicity of excitatory synapses and required for spine shrinkage during long-term depression (LTD). Involved in regulation of astrocyte morphology, antagonistic to Arp2/3 complex activator WASL/N-WASP function (By similarity).</text>
</comment>
<comment type="subunit">
    <text evidence="2 4">Monomer and homodimer. Interacts with CXADR. Interacts presynaptically with the glutamate receptors GRIA2, GRIA3, GRIK3, isoform 3 of GRIA4, isoform A of GRM4, GRM7 and GRM8; with NAPA and NAPB; and with BTG2. The interaction with NAPA and NAPB disrupts the interaction with GRIA2, conducting to the internalization of GRIA2. Interacts with PRKCA; with the amine transporters SLC6A2 and SLC6A3; with the channels ASIC1 and ASIC2; with the GTP-binding proteins ARF1 and ARF3; with the ephrin receptor tyrosine kinases EPHA7, EPHB1 and EPHB2; with ERBB2 and through its PDZ domain with the C-terminal tail of PRLHR. Interacts with UNC5A. Interacts (via AH domain) with NCS1/FREQ; in a calcium-dependent manner. Interacts with F-actin and associates with the ARP2/3 complex. Interacts (via PDZ domain) with ARF1 (activated); the interaction blocks Arp2/3 complex inhibition. Interacts with SORCS3 (By similarity).</text>
</comment>
<comment type="subcellular location">
    <subcellularLocation>
        <location evidence="3">Cytoplasm</location>
        <location evidence="3">Perinuclear region</location>
    </subcellularLocation>
    <subcellularLocation>
        <location evidence="3">Membrane</location>
        <topology evidence="3">Peripheral membrane protein</topology>
    </subcellularLocation>
    <subcellularLocation>
        <location evidence="2">Membrane</location>
        <topology evidence="2">Lipid-anchor</topology>
    </subcellularLocation>
    <subcellularLocation>
        <location evidence="3">Postsynaptic density</location>
    </subcellularLocation>
    <subcellularLocation>
        <location evidence="3">Synapse</location>
        <location evidence="3">Synaptosome</location>
    </subcellularLocation>
    <subcellularLocation>
        <location evidence="3">Cytoplasm</location>
        <location evidence="3">Cytoskeleton</location>
    </subcellularLocation>
    <text evidence="3">Also membrane-associated, present at excitatory synapses.</text>
</comment>
<comment type="domain">
    <text evidence="1">The AH domain mediates binding to F-actin.</text>
</comment>
<comment type="domain">
    <text evidence="1">The unoccupied PDZ domain is probably involved in allosteric modulation by forming an intramolecular bridge with the AH domain leading to a 'closed' formation. Binding of a PDZ ligand, such as GRIA2, allows enhanced interactions with F-actin and the Arp2/3 complex thus enhanced inhibition of actin polymerization (By similarity).</text>
</comment>
<comment type="PTM">
    <text evidence="1">Phosphorylation at Thr-82 appears to inhibit the interaction with AMPA receptors.</text>
</comment>
<comment type="PTM">
    <text evidence="1">Palmitoylation on Cys-413 is essential for long-term synaptic depression (LTD).</text>
</comment>